<feature type="propeptide" id="PRO_0000029279" evidence="2">
    <location>
        <begin position="1"/>
        <end position="9"/>
    </location>
</feature>
<feature type="chain" id="PRO_0000029280" description="Amidophosphoribosyltransferase">
    <location>
        <begin position="10"/>
        <end position="449"/>
    </location>
</feature>
<feature type="domain" description="Glutamine amidotransferase type-2" evidence="1">
    <location>
        <begin position="10"/>
        <end position="224"/>
    </location>
</feature>
<feature type="active site" description="Nucleophile" evidence="1">
    <location>
        <position position="10"/>
    </location>
</feature>
<feature type="binding site" evidence="1">
    <location>
        <position position="239"/>
    </location>
    <ligand>
        <name>[4Fe-4S] cluster</name>
        <dbReference type="ChEBI" id="CHEBI:49883"/>
    </ligand>
</feature>
<feature type="binding site" evidence="1">
    <location>
        <position position="286"/>
    </location>
    <ligand>
        <name>Mg(2+)</name>
        <dbReference type="ChEBI" id="CHEBI:18420"/>
    </ligand>
</feature>
<feature type="binding site" evidence="1">
    <location>
        <position position="346"/>
    </location>
    <ligand>
        <name>Mg(2+)</name>
        <dbReference type="ChEBI" id="CHEBI:18420"/>
    </ligand>
</feature>
<feature type="binding site" evidence="1">
    <location>
        <position position="347"/>
    </location>
    <ligand>
        <name>Mg(2+)</name>
        <dbReference type="ChEBI" id="CHEBI:18420"/>
    </ligand>
</feature>
<feature type="binding site" evidence="1">
    <location>
        <position position="383"/>
    </location>
    <ligand>
        <name>[4Fe-4S] cluster</name>
        <dbReference type="ChEBI" id="CHEBI:49883"/>
    </ligand>
</feature>
<feature type="binding site" evidence="1">
    <location>
        <position position="432"/>
    </location>
    <ligand>
        <name>[4Fe-4S] cluster</name>
        <dbReference type="ChEBI" id="CHEBI:49883"/>
    </ligand>
</feature>
<feature type="binding site" evidence="1">
    <location>
        <position position="435"/>
    </location>
    <ligand>
        <name>[4Fe-4S] cluster</name>
        <dbReference type="ChEBI" id="CHEBI:49883"/>
    </ligand>
</feature>
<accession>O57979</accession>
<reference key="1">
    <citation type="journal article" date="1998" name="DNA Res.">
        <title>Complete sequence and gene organization of the genome of a hyper-thermophilic archaebacterium, Pyrococcus horikoshii OT3.</title>
        <authorList>
            <person name="Kawarabayasi Y."/>
            <person name="Sawada M."/>
            <person name="Horikawa H."/>
            <person name="Haikawa Y."/>
            <person name="Hino Y."/>
            <person name="Yamamoto S."/>
            <person name="Sekine M."/>
            <person name="Baba S."/>
            <person name="Kosugi H."/>
            <person name="Hosoyama A."/>
            <person name="Nagai Y."/>
            <person name="Sakai M."/>
            <person name="Ogura K."/>
            <person name="Otsuka R."/>
            <person name="Nakazawa H."/>
            <person name="Takamiya M."/>
            <person name="Ohfuku Y."/>
            <person name="Funahashi T."/>
            <person name="Tanaka T."/>
            <person name="Kudoh Y."/>
            <person name="Yamazaki J."/>
            <person name="Kushida N."/>
            <person name="Oguchi A."/>
            <person name="Aoki K."/>
            <person name="Yoshizawa T."/>
            <person name="Nakamura Y."/>
            <person name="Robb F.T."/>
            <person name="Horikoshi K."/>
            <person name="Masuchi Y."/>
            <person name="Shizuya H."/>
            <person name="Kikuchi H."/>
        </authorList>
    </citation>
    <scope>NUCLEOTIDE SEQUENCE [LARGE SCALE GENOMIC DNA]</scope>
    <source>
        <strain>ATCC 700860 / DSM 12428 / JCM 9974 / NBRC 100139 / OT-3</strain>
    </source>
</reference>
<gene>
    <name evidence="1" type="primary">purF</name>
    <name type="ordered locus">PH0240</name>
</gene>
<dbReference type="EC" id="2.4.2.14" evidence="1"/>
<dbReference type="EMBL" id="BA000001">
    <property type="protein sequence ID" value="BAA29312.1"/>
    <property type="molecule type" value="Genomic_DNA"/>
</dbReference>
<dbReference type="PIR" id="A71248">
    <property type="entry name" value="A71248"/>
</dbReference>
<dbReference type="SMR" id="O57979"/>
<dbReference type="IntAct" id="O57979">
    <property type="interactions" value="1"/>
</dbReference>
<dbReference type="MINT" id="O57979"/>
<dbReference type="STRING" id="70601.gene:9377156"/>
<dbReference type="MEROPS" id="C44.001"/>
<dbReference type="EnsemblBacteria" id="BAA29312">
    <property type="protein sequence ID" value="BAA29312"/>
    <property type="gene ID" value="BAA29312"/>
</dbReference>
<dbReference type="KEGG" id="pho:PH0240"/>
<dbReference type="eggNOG" id="arCOG00093">
    <property type="taxonomic scope" value="Archaea"/>
</dbReference>
<dbReference type="UniPathway" id="UPA00074">
    <property type="reaction ID" value="UER00124"/>
</dbReference>
<dbReference type="Proteomes" id="UP000000752">
    <property type="component" value="Chromosome"/>
</dbReference>
<dbReference type="GO" id="GO:0051539">
    <property type="term" value="F:4 iron, 4 sulfur cluster binding"/>
    <property type="evidence" value="ECO:0007669"/>
    <property type="project" value="UniProtKB-KW"/>
</dbReference>
<dbReference type="GO" id="GO:0004044">
    <property type="term" value="F:amidophosphoribosyltransferase activity"/>
    <property type="evidence" value="ECO:0007669"/>
    <property type="project" value="UniProtKB-UniRule"/>
</dbReference>
<dbReference type="GO" id="GO:0000287">
    <property type="term" value="F:magnesium ion binding"/>
    <property type="evidence" value="ECO:0007669"/>
    <property type="project" value="UniProtKB-UniRule"/>
</dbReference>
<dbReference type="GO" id="GO:0006189">
    <property type="term" value="P:'de novo' IMP biosynthetic process"/>
    <property type="evidence" value="ECO:0007669"/>
    <property type="project" value="UniProtKB-UniRule"/>
</dbReference>
<dbReference type="GO" id="GO:0009113">
    <property type="term" value="P:purine nucleobase biosynthetic process"/>
    <property type="evidence" value="ECO:0007669"/>
    <property type="project" value="InterPro"/>
</dbReference>
<dbReference type="CDD" id="cd00715">
    <property type="entry name" value="GPATase_N"/>
    <property type="match status" value="1"/>
</dbReference>
<dbReference type="CDD" id="cd06223">
    <property type="entry name" value="PRTases_typeI"/>
    <property type="match status" value="1"/>
</dbReference>
<dbReference type="Gene3D" id="3.40.50.2020">
    <property type="match status" value="1"/>
</dbReference>
<dbReference type="Gene3D" id="3.60.20.10">
    <property type="entry name" value="Glutamine Phosphoribosylpyrophosphate, subunit 1, domain 1"/>
    <property type="match status" value="1"/>
</dbReference>
<dbReference type="HAMAP" id="MF_01931">
    <property type="entry name" value="PurF"/>
    <property type="match status" value="1"/>
</dbReference>
<dbReference type="InterPro" id="IPR017932">
    <property type="entry name" value="GATase_2_dom"/>
</dbReference>
<dbReference type="InterPro" id="IPR029055">
    <property type="entry name" value="Ntn_hydrolases_N"/>
</dbReference>
<dbReference type="InterPro" id="IPR000836">
    <property type="entry name" value="PRibTrfase_dom"/>
</dbReference>
<dbReference type="InterPro" id="IPR029057">
    <property type="entry name" value="PRTase-like"/>
</dbReference>
<dbReference type="InterPro" id="IPR005854">
    <property type="entry name" value="PurF"/>
</dbReference>
<dbReference type="InterPro" id="IPR035584">
    <property type="entry name" value="PurF_N"/>
</dbReference>
<dbReference type="NCBIfam" id="TIGR01134">
    <property type="entry name" value="purF"/>
    <property type="match status" value="1"/>
</dbReference>
<dbReference type="PANTHER" id="PTHR11907">
    <property type="entry name" value="AMIDOPHOSPHORIBOSYLTRANSFERASE"/>
    <property type="match status" value="1"/>
</dbReference>
<dbReference type="Pfam" id="PF13537">
    <property type="entry name" value="GATase_7"/>
    <property type="match status" value="1"/>
</dbReference>
<dbReference type="Pfam" id="PF00156">
    <property type="entry name" value="Pribosyltran"/>
    <property type="match status" value="1"/>
</dbReference>
<dbReference type="PIRSF" id="PIRSF000485">
    <property type="entry name" value="Amd_phspho_trans"/>
    <property type="match status" value="1"/>
</dbReference>
<dbReference type="SUPFAM" id="SSF56235">
    <property type="entry name" value="N-terminal nucleophile aminohydrolases (Ntn hydrolases)"/>
    <property type="match status" value="1"/>
</dbReference>
<dbReference type="SUPFAM" id="SSF53271">
    <property type="entry name" value="PRTase-like"/>
    <property type="match status" value="1"/>
</dbReference>
<dbReference type="PROSITE" id="PS51278">
    <property type="entry name" value="GATASE_TYPE_2"/>
    <property type="match status" value="1"/>
</dbReference>
<dbReference type="PROSITE" id="PS00103">
    <property type="entry name" value="PUR_PYR_PR_TRANSFER"/>
    <property type="match status" value="1"/>
</dbReference>
<sequence>MRGEIMKEKCGIFGAYSQDATKKTYYGLMALQHRGQEGAGISVWDGDIRTVKGHGLVSEVFKGGSIRRLNGNPVIGHVRYSTSGSLSEVQPLEVECCGYKVSIAHNGTLTNFLPLRRFYESRGFKFRSSIDTEVIAVSFLNHYSELKDEFEAMSRVFEEVKGAYSVLMLFNGKLIAVRDPVGFRPLSFGAGDGYYFSSEDSALRMFCTNIRDVSPGEVIVVKDGEAESKIVGRSEHAYCVFEYIYFARPDSIINGISVYWARYRMGVELARESPAEGDVVIAVPDSGRTAALGFAHESGIPYMEGLIKNRYIGRTFIMPSGREIKVRLKLSPVKEVIKGRRIVLVDDSIVRGTTMKNIVKMLRDAGAREVHVRIASPPIRYPCYMGIDIPTRHELIAAWKSIEEIKKEIGADSLAYLSVEGLKRAIGTDKLCMACLTGNYPEWAFDFKV</sequence>
<protein>
    <recommendedName>
        <fullName evidence="1">Amidophosphoribosyltransferase</fullName>
        <shortName evidence="1">ATase</shortName>
        <ecNumber evidence="1">2.4.2.14</ecNumber>
    </recommendedName>
    <alternativeName>
        <fullName evidence="1">Glutamine phosphoribosylpyrophosphate amidotransferase</fullName>
        <shortName evidence="1">GPATase</shortName>
    </alternativeName>
</protein>
<name>PUR1_PYRHO</name>
<comment type="function">
    <text evidence="1">Catalyzes the formation of phosphoribosylamine from phosphoribosylpyrophosphate (PRPP) and glutamine.</text>
</comment>
<comment type="catalytic activity">
    <reaction evidence="1">
        <text>5-phospho-beta-D-ribosylamine + L-glutamate + diphosphate = 5-phospho-alpha-D-ribose 1-diphosphate + L-glutamine + H2O</text>
        <dbReference type="Rhea" id="RHEA:14905"/>
        <dbReference type="ChEBI" id="CHEBI:15377"/>
        <dbReference type="ChEBI" id="CHEBI:29985"/>
        <dbReference type="ChEBI" id="CHEBI:33019"/>
        <dbReference type="ChEBI" id="CHEBI:58017"/>
        <dbReference type="ChEBI" id="CHEBI:58359"/>
        <dbReference type="ChEBI" id="CHEBI:58681"/>
        <dbReference type="EC" id="2.4.2.14"/>
    </reaction>
</comment>
<comment type="cofactor">
    <cofactor evidence="1">
        <name>Mg(2+)</name>
        <dbReference type="ChEBI" id="CHEBI:18420"/>
    </cofactor>
    <text evidence="1">Binds 1 Mg(2+) ion per subunit.</text>
</comment>
<comment type="cofactor">
    <cofactor evidence="1">
        <name>[4Fe-4S] cluster</name>
        <dbReference type="ChEBI" id="CHEBI:49883"/>
    </cofactor>
    <text evidence="1">Binds 1 [4Fe-4S] cluster per subunit.</text>
</comment>
<comment type="pathway">
    <text evidence="1">Purine metabolism; IMP biosynthesis via de novo pathway; N(1)-(5-phospho-D-ribosyl)glycinamide from 5-phospho-alpha-D-ribose 1-diphosphate: step 1/2.</text>
</comment>
<comment type="similarity">
    <text evidence="1">In the C-terminal section; belongs to the purine/pyrimidine phosphoribosyltransferase family.</text>
</comment>
<organism>
    <name type="scientific">Pyrococcus horikoshii (strain ATCC 700860 / DSM 12428 / JCM 9974 / NBRC 100139 / OT-3)</name>
    <dbReference type="NCBI Taxonomy" id="70601"/>
    <lineage>
        <taxon>Archaea</taxon>
        <taxon>Methanobacteriati</taxon>
        <taxon>Methanobacteriota</taxon>
        <taxon>Thermococci</taxon>
        <taxon>Thermococcales</taxon>
        <taxon>Thermococcaceae</taxon>
        <taxon>Pyrococcus</taxon>
    </lineage>
</organism>
<evidence type="ECO:0000255" key="1">
    <source>
        <dbReference type="HAMAP-Rule" id="MF_01931"/>
    </source>
</evidence>
<evidence type="ECO:0000305" key="2"/>
<proteinExistence type="inferred from homology"/>
<keyword id="KW-0004">4Fe-4S</keyword>
<keyword id="KW-0315">Glutamine amidotransferase</keyword>
<keyword id="KW-0328">Glycosyltransferase</keyword>
<keyword id="KW-0408">Iron</keyword>
<keyword id="KW-0411">Iron-sulfur</keyword>
<keyword id="KW-0460">Magnesium</keyword>
<keyword id="KW-0479">Metal-binding</keyword>
<keyword id="KW-0658">Purine biosynthesis</keyword>
<keyword id="KW-0808">Transferase</keyword>